<accession>C0PZ88</accession>
<proteinExistence type="inferred from homology"/>
<gene>
    <name evidence="1" type="primary">hemF</name>
    <name type="ordered locus">SPC_1207</name>
</gene>
<reference key="1">
    <citation type="journal article" date="2009" name="PLoS ONE">
        <title>Salmonella paratyphi C: genetic divergence from Salmonella choleraesuis and pathogenic convergence with Salmonella typhi.</title>
        <authorList>
            <person name="Liu W.-Q."/>
            <person name="Feng Y."/>
            <person name="Wang Y."/>
            <person name="Zou Q.-H."/>
            <person name="Chen F."/>
            <person name="Guo J.-T."/>
            <person name="Peng Y.-H."/>
            <person name="Jin Y."/>
            <person name="Li Y.-G."/>
            <person name="Hu S.-N."/>
            <person name="Johnston R.N."/>
            <person name="Liu G.-R."/>
            <person name="Liu S.-L."/>
        </authorList>
    </citation>
    <scope>NUCLEOTIDE SEQUENCE [LARGE SCALE GENOMIC DNA]</scope>
    <source>
        <strain>RKS4594</strain>
    </source>
</reference>
<keyword id="KW-0963">Cytoplasm</keyword>
<keyword id="KW-0350">Heme biosynthesis</keyword>
<keyword id="KW-0479">Metal-binding</keyword>
<keyword id="KW-0560">Oxidoreductase</keyword>
<keyword id="KW-0627">Porphyrin biosynthesis</keyword>
<feature type="chain" id="PRO_1000133189" description="Oxygen-dependent coproporphyrinogen-III oxidase">
    <location>
        <begin position="1"/>
        <end position="299"/>
    </location>
</feature>
<feature type="region of interest" description="Important for dimerization" evidence="1">
    <location>
        <begin position="240"/>
        <end position="275"/>
    </location>
</feature>
<feature type="active site" description="Proton donor" evidence="1">
    <location>
        <position position="106"/>
    </location>
</feature>
<feature type="binding site" evidence="1">
    <location>
        <position position="92"/>
    </location>
    <ligand>
        <name>substrate</name>
    </ligand>
</feature>
<feature type="binding site" evidence="1">
    <location>
        <position position="96"/>
    </location>
    <ligand>
        <name>a divalent metal cation</name>
        <dbReference type="ChEBI" id="CHEBI:60240"/>
    </ligand>
</feature>
<feature type="binding site" evidence="1">
    <location>
        <position position="106"/>
    </location>
    <ligand>
        <name>a divalent metal cation</name>
        <dbReference type="ChEBI" id="CHEBI:60240"/>
    </ligand>
</feature>
<feature type="binding site" evidence="1">
    <location>
        <begin position="108"/>
        <end position="110"/>
    </location>
    <ligand>
        <name>substrate</name>
    </ligand>
</feature>
<feature type="binding site" evidence="1">
    <location>
        <position position="145"/>
    </location>
    <ligand>
        <name>a divalent metal cation</name>
        <dbReference type="ChEBI" id="CHEBI:60240"/>
    </ligand>
</feature>
<feature type="binding site" evidence="1">
    <location>
        <position position="175"/>
    </location>
    <ligand>
        <name>a divalent metal cation</name>
        <dbReference type="ChEBI" id="CHEBI:60240"/>
    </ligand>
</feature>
<feature type="binding site" evidence="1">
    <location>
        <begin position="258"/>
        <end position="260"/>
    </location>
    <ligand>
        <name>substrate</name>
    </ligand>
</feature>
<feature type="site" description="Important for dimerization" evidence="1">
    <location>
        <position position="175"/>
    </location>
</feature>
<protein>
    <recommendedName>
        <fullName evidence="1">Oxygen-dependent coproporphyrinogen-III oxidase</fullName>
        <shortName evidence="1">CPO</shortName>
        <shortName evidence="1">Coprogen oxidase</shortName>
        <shortName evidence="1">Coproporphyrinogenase</shortName>
        <ecNumber evidence="1">1.3.3.3</ecNumber>
    </recommendedName>
</protein>
<comment type="function">
    <text evidence="1">Involved in the heme biosynthesis. Catalyzes the aerobic oxidative decarboxylation of propionate groups of rings A and B of coproporphyrinogen-III to yield the vinyl groups in protoporphyrinogen-IX.</text>
</comment>
<comment type="catalytic activity">
    <reaction evidence="1">
        <text>coproporphyrinogen III + O2 + 2 H(+) = protoporphyrinogen IX + 2 CO2 + 2 H2O</text>
        <dbReference type="Rhea" id="RHEA:18257"/>
        <dbReference type="ChEBI" id="CHEBI:15377"/>
        <dbReference type="ChEBI" id="CHEBI:15378"/>
        <dbReference type="ChEBI" id="CHEBI:15379"/>
        <dbReference type="ChEBI" id="CHEBI:16526"/>
        <dbReference type="ChEBI" id="CHEBI:57307"/>
        <dbReference type="ChEBI" id="CHEBI:57309"/>
        <dbReference type="EC" id="1.3.3.3"/>
    </reaction>
</comment>
<comment type="cofactor">
    <cofactor evidence="1">
        <name>a divalent metal cation</name>
        <dbReference type="ChEBI" id="CHEBI:60240"/>
    </cofactor>
</comment>
<comment type="pathway">
    <text evidence="1">Porphyrin-containing compound metabolism; protoporphyrin-IX biosynthesis; protoporphyrinogen-IX from coproporphyrinogen-III (O2 route): step 1/1.</text>
</comment>
<comment type="subunit">
    <text evidence="1">Homodimer.</text>
</comment>
<comment type="subcellular location">
    <subcellularLocation>
        <location evidence="1">Cytoplasm</location>
    </subcellularLocation>
</comment>
<comment type="similarity">
    <text evidence="1">Belongs to the aerobic coproporphyrinogen-III oxidase family.</text>
</comment>
<organism>
    <name type="scientific">Salmonella paratyphi C (strain RKS4594)</name>
    <dbReference type="NCBI Taxonomy" id="476213"/>
    <lineage>
        <taxon>Bacteria</taxon>
        <taxon>Pseudomonadati</taxon>
        <taxon>Pseudomonadota</taxon>
        <taxon>Gammaproteobacteria</taxon>
        <taxon>Enterobacterales</taxon>
        <taxon>Enterobacteriaceae</taxon>
        <taxon>Salmonella</taxon>
    </lineage>
</organism>
<dbReference type="EC" id="1.3.3.3" evidence="1"/>
<dbReference type="EMBL" id="CP000857">
    <property type="protein sequence ID" value="ACN45371.1"/>
    <property type="molecule type" value="Genomic_DNA"/>
</dbReference>
<dbReference type="SMR" id="C0PZ88"/>
<dbReference type="KEGG" id="sei:SPC_1207"/>
<dbReference type="HOGENOM" id="CLU_026169_0_1_6"/>
<dbReference type="UniPathway" id="UPA00251">
    <property type="reaction ID" value="UER00322"/>
</dbReference>
<dbReference type="Proteomes" id="UP000001599">
    <property type="component" value="Chromosome"/>
</dbReference>
<dbReference type="GO" id="GO:0005737">
    <property type="term" value="C:cytoplasm"/>
    <property type="evidence" value="ECO:0007669"/>
    <property type="project" value="UniProtKB-SubCell"/>
</dbReference>
<dbReference type="GO" id="GO:0004109">
    <property type="term" value="F:coproporphyrinogen oxidase activity"/>
    <property type="evidence" value="ECO:0007669"/>
    <property type="project" value="UniProtKB-UniRule"/>
</dbReference>
<dbReference type="GO" id="GO:0046872">
    <property type="term" value="F:metal ion binding"/>
    <property type="evidence" value="ECO:0007669"/>
    <property type="project" value="UniProtKB-KW"/>
</dbReference>
<dbReference type="GO" id="GO:0042803">
    <property type="term" value="F:protein homodimerization activity"/>
    <property type="evidence" value="ECO:0000250"/>
    <property type="project" value="UniProtKB"/>
</dbReference>
<dbReference type="GO" id="GO:0006782">
    <property type="term" value="P:protoporphyrinogen IX biosynthetic process"/>
    <property type="evidence" value="ECO:0007669"/>
    <property type="project" value="UniProtKB-UniRule"/>
</dbReference>
<dbReference type="FunFam" id="3.40.1500.10:FF:000001">
    <property type="entry name" value="Oxygen-dependent coproporphyrinogen-III oxidase"/>
    <property type="match status" value="1"/>
</dbReference>
<dbReference type="Gene3D" id="3.40.1500.10">
    <property type="entry name" value="Coproporphyrinogen III oxidase, aerobic"/>
    <property type="match status" value="1"/>
</dbReference>
<dbReference type="HAMAP" id="MF_00333">
    <property type="entry name" value="Coprogen_oxidas"/>
    <property type="match status" value="1"/>
</dbReference>
<dbReference type="InterPro" id="IPR001260">
    <property type="entry name" value="Coprogen_oxidase_aer"/>
</dbReference>
<dbReference type="InterPro" id="IPR036406">
    <property type="entry name" value="Coprogen_oxidase_aer_sf"/>
</dbReference>
<dbReference type="InterPro" id="IPR018375">
    <property type="entry name" value="Coprogen_oxidase_CS"/>
</dbReference>
<dbReference type="NCBIfam" id="NF003727">
    <property type="entry name" value="PRK05330.1"/>
    <property type="match status" value="1"/>
</dbReference>
<dbReference type="PANTHER" id="PTHR10755">
    <property type="entry name" value="COPROPORPHYRINOGEN III OXIDASE, MITOCHONDRIAL"/>
    <property type="match status" value="1"/>
</dbReference>
<dbReference type="PANTHER" id="PTHR10755:SF0">
    <property type="entry name" value="OXYGEN-DEPENDENT COPROPORPHYRINOGEN-III OXIDASE, MITOCHONDRIAL"/>
    <property type="match status" value="1"/>
</dbReference>
<dbReference type="Pfam" id="PF01218">
    <property type="entry name" value="Coprogen_oxidas"/>
    <property type="match status" value="1"/>
</dbReference>
<dbReference type="PIRSF" id="PIRSF000166">
    <property type="entry name" value="Coproporphyri_ox"/>
    <property type="match status" value="1"/>
</dbReference>
<dbReference type="PRINTS" id="PR00073">
    <property type="entry name" value="COPRGNOXDASE"/>
</dbReference>
<dbReference type="SUPFAM" id="SSF102886">
    <property type="entry name" value="Coproporphyrinogen III oxidase"/>
    <property type="match status" value="1"/>
</dbReference>
<dbReference type="PROSITE" id="PS01021">
    <property type="entry name" value="COPROGEN_OXIDASE"/>
    <property type="match status" value="1"/>
</dbReference>
<sequence>MKPDAHHVKQFLLRLQDDICQKLSAVDGANFVEDSWRREAGGGGRSRVLRNGGIFEQAGVNFSHVHGDAMPASATAHRPELAGRSFEAMGVSLVVHPHNPYIPTSHANVRFFIAEKPGADPVWWFGGGFDLTPYYGFEEDAVHWHRTARDLCQPFGDDVYPRYKKWCDDYFFLKHRNEQRGIGGLFFDDLNTPDFDHCFDFMQAVGNGYTRAYLPIVERRKAMVWGERERNFQLYRRGRYVEFNLVWDRGTLFGLQTGGRTESILMSMPPLVRWEYDWQPEAGSPEAALSEFIQVRDWI</sequence>
<evidence type="ECO:0000255" key="1">
    <source>
        <dbReference type="HAMAP-Rule" id="MF_00333"/>
    </source>
</evidence>
<name>HEM6_SALPC</name>